<comment type="catalytic activity">
    <reaction>
        <text>glyoxylate + acetyl-CoA + H2O = (S)-malate + CoA + H(+)</text>
        <dbReference type="Rhea" id="RHEA:18181"/>
        <dbReference type="ChEBI" id="CHEBI:15377"/>
        <dbReference type="ChEBI" id="CHEBI:15378"/>
        <dbReference type="ChEBI" id="CHEBI:15589"/>
        <dbReference type="ChEBI" id="CHEBI:36655"/>
        <dbReference type="ChEBI" id="CHEBI:57287"/>
        <dbReference type="ChEBI" id="CHEBI:57288"/>
        <dbReference type="EC" id="2.3.3.9"/>
    </reaction>
</comment>
<comment type="pathway">
    <text>Carbohydrate metabolism; glyoxylate cycle; (S)-malate from isocitrate: step 2/2.</text>
</comment>
<comment type="subcellular location">
    <subcellularLocation>
        <location>Glyoxysome</location>
    </subcellularLocation>
</comment>
<comment type="similarity">
    <text evidence="3">Belongs to the malate synthase family.</text>
</comment>
<feature type="chain" id="PRO_0000166869" description="Malate synthase, glyoxysomal">
    <location>
        <begin position="1"/>
        <end position="567"/>
    </location>
</feature>
<feature type="short sequence motif" description="Microbody targeting signal" evidence="2">
    <location>
        <begin position="565"/>
        <end position="567"/>
    </location>
</feature>
<feature type="active site" description="Proton acceptor" evidence="1">
    <location>
        <position position="182"/>
    </location>
</feature>
<feature type="active site" description="Proton donor" evidence="1">
    <location>
        <position position="468"/>
    </location>
</feature>
<sequence>MIGLGSYGYTAPSSKKINAYDVPQGVDIRGRFDEEFAKILTKDALQFVADLQREFRNHIKYAMECRKEAKRRYNEGALPGFDPATRYIREGKWTCVPFPPAVADRRVEITGPVERKMIINALNSGAKVFMADFEDALSPSWENLMRGQINLKDAVEGTITFNDKARNRVYKLNNEIAKLFVRPRGWHLPEAHIFIDGEPATGCLVDFGLYFYHNYATFRNTQGQGFGPFFYLPKMENSREAKIWNSVFEKAEKMAGIEKGSIRATVLIETLPAVFQMDEIFYELRDHSVGLNCGRWDYIFSYVKTFQGHPDRLLPDRGQVGMTQHFMRSYSDLLIRTCHRRGVHAMGGMAAQIPIRDDPTANEAAFELVRKDKQREVKAGHDGTWAAHPGLIKTCMEVFTNNMGNTPNQIETVKRDYASNLTEDDLLQRPRGVRTMEGLRLNTRVGIQYLAAWLTGSGSVPLYNLMEDAATAEISRVQIWQWLKYGVELDGDGLGVRVNHVFGRVVEEEMARIEREVGKEKFKKGMYKEACKIFTRQCTASTLDDFLTLDAYNYIVIHHPKDVSSKL</sequence>
<proteinExistence type="evidence at transcript level"/>
<evidence type="ECO:0000250" key="1"/>
<evidence type="ECO:0000255" key="2"/>
<evidence type="ECO:0000305" key="3"/>
<reference key="1">
    <citation type="journal article" date="1990" name="Nucleic Acids Res.">
        <title>Nucleotide sequence of cottonseed malate synthase.</title>
        <authorList>
            <person name="Turley R.B."/>
            <person name="Choe S.M."/>
            <person name="Ni W."/>
            <person name="Trelease R.N."/>
        </authorList>
    </citation>
    <scope>NUCLEOTIDE SEQUENCE [MRNA]</scope>
    <source>
        <tissue>Seed</tissue>
    </source>
</reference>
<accession>P17432</accession>
<organism>
    <name type="scientific">Gossypium hirsutum</name>
    <name type="common">Upland cotton</name>
    <name type="synonym">Gossypium mexicanum</name>
    <dbReference type="NCBI Taxonomy" id="3635"/>
    <lineage>
        <taxon>Eukaryota</taxon>
        <taxon>Viridiplantae</taxon>
        <taxon>Streptophyta</taxon>
        <taxon>Embryophyta</taxon>
        <taxon>Tracheophyta</taxon>
        <taxon>Spermatophyta</taxon>
        <taxon>Magnoliopsida</taxon>
        <taxon>eudicotyledons</taxon>
        <taxon>Gunneridae</taxon>
        <taxon>Pentapetalae</taxon>
        <taxon>rosids</taxon>
        <taxon>malvids</taxon>
        <taxon>Malvales</taxon>
        <taxon>Malvaceae</taxon>
        <taxon>Malvoideae</taxon>
        <taxon>Gossypium</taxon>
    </lineage>
</organism>
<name>MASY_GOSHI</name>
<protein>
    <recommendedName>
        <fullName>Malate synthase, glyoxysomal</fullName>
        <ecNumber>2.3.3.9</ecNumber>
    </recommendedName>
</protein>
<dbReference type="EC" id="2.3.3.9"/>
<dbReference type="EMBL" id="X52305">
    <property type="protein sequence ID" value="CAA36546.1"/>
    <property type="molecule type" value="mRNA"/>
</dbReference>
<dbReference type="PIR" id="S12735">
    <property type="entry name" value="SYCNMU"/>
</dbReference>
<dbReference type="SMR" id="P17432"/>
<dbReference type="STRING" id="3635.P17432"/>
<dbReference type="PaxDb" id="3635-P17432"/>
<dbReference type="UniPathway" id="UPA00703">
    <property type="reaction ID" value="UER00720"/>
</dbReference>
<dbReference type="Proteomes" id="UP000189702">
    <property type="component" value="Unplaced"/>
</dbReference>
<dbReference type="GO" id="GO:0005737">
    <property type="term" value="C:cytoplasm"/>
    <property type="evidence" value="ECO:0000318"/>
    <property type="project" value="GO_Central"/>
</dbReference>
<dbReference type="GO" id="GO:0009514">
    <property type="term" value="C:glyoxysome"/>
    <property type="evidence" value="ECO:0007669"/>
    <property type="project" value="UniProtKB-SubCell"/>
</dbReference>
<dbReference type="GO" id="GO:0004474">
    <property type="term" value="F:malate synthase activity"/>
    <property type="evidence" value="ECO:0000318"/>
    <property type="project" value="GO_Central"/>
</dbReference>
<dbReference type="GO" id="GO:0006097">
    <property type="term" value="P:glyoxylate cycle"/>
    <property type="evidence" value="ECO:0000318"/>
    <property type="project" value="GO_Central"/>
</dbReference>
<dbReference type="GO" id="GO:0006099">
    <property type="term" value="P:tricarboxylic acid cycle"/>
    <property type="evidence" value="ECO:0007669"/>
    <property type="project" value="UniProtKB-KW"/>
</dbReference>
<dbReference type="CDD" id="cd00727">
    <property type="entry name" value="malate_synt_A"/>
    <property type="match status" value="1"/>
</dbReference>
<dbReference type="FunFam" id="1.20.1220.12:FF:000001">
    <property type="entry name" value="Malate synthase"/>
    <property type="match status" value="1"/>
</dbReference>
<dbReference type="FunFam" id="3.20.20.360:FF:000001">
    <property type="entry name" value="Malate synthase"/>
    <property type="match status" value="1"/>
</dbReference>
<dbReference type="Gene3D" id="3.20.20.360">
    <property type="entry name" value="Malate synthase, domain 3"/>
    <property type="match status" value="1"/>
</dbReference>
<dbReference type="Gene3D" id="1.20.1220.12">
    <property type="entry name" value="Malate synthase, domain III"/>
    <property type="match status" value="1"/>
</dbReference>
<dbReference type="InterPro" id="IPR044856">
    <property type="entry name" value="Malate_synth_C_sf"/>
</dbReference>
<dbReference type="InterPro" id="IPR011076">
    <property type="entry name" value="Malate_synth_sf"/>
</dbReference>
<dbReference type="InterPro" id="IPR006252">
    <property type="entry name" value="Malate_synthA"/>
</dbReference>
<dbReference type="InterPro" id="IPR019830">
    <property type="entry name" value="Malate_synthase_CS"/>
</dbReference>
<dbReference type="InterPro" id="IPR001465">
    <property type="entry name" value="Malate_synthase_TIM"/>
</dbReference>
<dbReference type="InterPro" id="IPR048355">
    <property type="entry name" value="MS_C"/>
</dbReference>
<dbReference type="InterPro" id="IPR048356">
    <property type="entry name" value="MS_N"/>
</dbReference>
<dbReference type="InterPro" id="IPR046363">
    <property type="entry name" value="MS_N_TIM-barrel_dom"/>
</dbReference>
<dbReference type="NCBIfam" id="TIGR01344">
    <property type="entry name" value="malate_syn_A"/>
    <property type="match status" value="1"/>
</dbReference>
<dbReference type="PANTHER" id="PTHR42902">
    <property type="entry name" value="MALATE SYNTHASE"/>
    <property type="match status" value="1"/>
</dbReference>
<dbReference type="PANTHER" id="PTHR42902:SF1">
    <property type="entry name" value="MALATE SYNTHASE 1-RELATED"/>
    <property type="match status" value="1"/>
</dbReference>
<dbReference type="Pfam" id="PF20659">
    <property type="entry name" value="MS_C"/>
    <property type="match status" value="1"/>
</dbReference>
<dbReference type="Pfam" id="PF20656">
    <property type="entry name" value="MS_N"/>
    <property type="match status" value="1"/>
</dbReference>
<dbReference type="Pfam" id="PF01274">
    <property type="entry name" value="MS_TIM-barrel"/>
    <property type="match status" value="1"/>
</dbReference>
<dbReference type="PIRSF" id="PIRSF001363">
    <property type="entry name" value="Malate_synth"/>
    <property type="match status" value="1"/>
</dbReference>
<dbReference type="SUPFAM" id="SSF51645">
    <property type="entry name" value="Malate synthase G"/>
    <property type="match status" value="1"/>
</dbReference>
<dbReference type="PROSITE" id="PS00510">
    <property type="entry name" value="MALATE_SYNTHASE"/>
    <property type="match status" value="1"/>
</dbReference>
<keyword id="KW-0329">Glyoxylate bypass</keyword>
<keyword id="KW-0330">Glyoxysome</keyword>
<keyword id="KW-0576">Peroxisome</keyword>
<keyword id="KW-1185">Reference proteome</keyword>
<keyword id="KW-0808">Transferase</keyword>
<keyword id="KW-0816">Tricarboxylic acid cycle</keyword>